<sequence length="382" mass="42786">MQIFVKTLTGKTITLEVESSDTIDNVKAKIQDKEGIPPDQQRLIFAGKQLEDGRTLADYNIQKESTLHLVLRLRGGMQIFVKTLTGKTITLEVESSDTIDNVKAKIQDKEGIPPDQQRLIFAGKQLEDGRTLADYNIQKESTLHLVLRLRGGMQIFVKTLTGKTITLEVESSDTIDNVKAKIQDKEGIPPDQQRLIFAGKQLEDGRTLADYNIQKESTLHLVLRLRGGMQIFVKTLTGKTITLEVESSDTIDNVKAKIQDKEGIPPDQQRLIFAGKQLEDGRTLADYNIQKESTLHLVLRLRGGMQIFVKTLTGKTITLEVESSDTIDNVKAKIQDKEGIPPDQQRLIFAGKQLEDGRTLADYNIQKESTLHLVLRLRGGSF</sequence>
<reference key="1">
    <citation type="journal article" date="1988" name="Mol. Gen. Genet.">
        <title>Characterization of a polyubiquitin gene from Arabidopsis thaliana.</title>
        <authorList>
            <person name="Burke T.J."/>
            <person name="Callis J."/>
            <person name="Vierstra R.D."/>
        </authorList>
    </citation>
    <scope>NUCLEOTIDE SEQUENCE [GENOMIC DNA]</scope>
</reference>
<reference key="2">
    <citation type="journal article" date="1995" name="Genetics">
        <title>Structure and evolution of genes encoding polyubiquitin and ubiquitin-like proteins in Arabidopsis thaliana ecotype Columbia.</title>
        <authorList>
            <person name="Callis J."/>
            <person name="Carpenter T."/>
            <person name="Sun C.W."/>
            <person name="Vierstra R.D."/>
        </authorList>
    </citation>
    <scope>NUCLEOTIDE SEQUENCE [GENOMIC DNA]</scope>
    <source>
        <strain>cv. Columbia</strain>
    </source>
</reference>
<reference key="3">
    <citation type="journal article" date="2000" name="Nature">
        <title>Sequence and analysis of chromosome 5 of the plant Arabidopsis thaliana.</title>
        <authorList>
            <person name="Tabata S."/>
            <person name="Kaneko T."/>
            <person name="Nakamura Y."/>
            <person name="Kotani H."/>
            <person name="Kato T."/>
            <person name="Asamizu E."/>
            <person name="Miyajima N."/>
            <person name="Sasamoto S."/>
            <person name="Kimura T."/>
            <person name="Hosouchi T."/>
            <person name="Kawashima K."/>
            <person name="Kohara M."/>
            <person name="Matsumoto M."/>
            <person name="Matsuno A."/>
            <person name="Muraki A."/>
            <person name="Nakayama S."/>
            <person name="Nakazaki N."/>
            <person name="Naruo K."/>
            <person name="Okumura S."/>
            <person name="Shinpo S."/>
            <person name="Takeuchi C."/>
            <person name="Wada T."/>
            <person name="Watanabe A."/>
            <person name="Yamada M."/>
            <person name="Yasuda M."/>
            <person name="Sato S."/>
            <person name="de la Bastide M."/>
            <person name="Huang E."/>
            <person name="Spiegel L."/>
            <person name="Gnoj L."/>
            <person name="O'Shaughnessy A."/>
            <person name="Preston R."/>
            <person name="Habermann K."/>
            <person name="Murray J."/>
            <person name="Johnson D."/>
            <person name="Rohlfing T."/>
            <person name="Nelson J."/>
            <person name="Stoneking T."/>
            <person name="Pepin K."/>
            <person name="Spieth J."/>
            <person name="Sekhon M."/>
            <person name="Armstrong J."/>
            <person name="Becker M."/>
            <person name="Belter E."/>
            <person name="Cordum H."/>
            <person name="Cordes M."/>
            <person name="Courtney L."/>
            <person name="Courtney W."/>
            <person name="Dante M."/>
            <person name="Du H."/>
            <person name="Edwards J."/>
            <person name="Fryman J."/>
            <person name="Haakensen B."/>
            <person name="Lamar E."/>
            <person name="Latreille P."/>
            <person name="Leonard S."/>
            <person name="Meyer R."/>
            <person name="Mulvaney E."/>
            <person name="Ozersky P."/>
            <person name="Riley A."/>
            <person name="Strowmatt C."/>
            <person name="Wagner-McPherson C."/>
            <person name="Wollam A."/>
            <person name="Yoakum M."/>
            <person name="Bell M."/>
            <person name="Dedhia N."/>
            <person name="Parnell L."/>
            <person name="Shah R."/>
            <person name="Rodriguez M."/>
            <person name="Hoon See L."/>
            <person name="Vil D."/>
            <person name="Baker J."/>
            <person name="Kirchoff K."/>
            <person name="Toth K."/>
            <person name="King L."/>
            <person name="Bahret A."/>
            <person name="Miller B."/>
            <person name="Marra M.A."/>
            <person name="Martienssen R."/>
            <person name="McCombie W.R."/>
            <person name="Wilson R.K."/>
            <person name="Murphy G."/>
            <person name="Bancroft I."/>
            <person name="Volckaert G."/>
            <person name="Wambutt R."/>
            <person name="Duesterhoeft A."/>
            <person name="Stiekema W."/>
            <person name="Pohl T."/>
            <person name="Entian K.-D."/>
            <person name="Terryn N."/>
            <person name="Hartley N."/>
            <person name="Bent E."/>
            <person name="Johnson S."/>
            <person name="Langham S.-A."/>
            <person name="McCullagh B."/>
            <person name="Robben J."/>
            <person name="Grymonprez B."/>
            <person name="Zimmermann W."/>
            <person name="Ramsperger U."/>
            <person name="Wedler H."/>
            <person name="Balke K."/>
            <person name="Wedler E."/>
            <person name="Peters S."/>
            <person name="van Staveren M."/>
            <person name="Dirkse W."/>
            <person name="Mooijman P."/>
            <person name="Klein Lankhorst R."/>
            <person name="Weitzenegger T."/>
            <person name="Bothe G."/>
            <person name="Rose M."/>
            <person name="Hauf J."/>
            <person name="Berneiser S."/>
            <person name="Hempel S."/>
            <person name="Feldpausch M."/>
            <person name="Lamberth S."/>
            <person name="Villarroel R."/>
            <person name="Gielen J."/>
            <person name="Ardiles W."/>
            <person name="Bents O."/>
            <person name="Lemcke K."/>
            <person name="Kolesov G."/>
            <person name="Mayer K.F.X."/>
            <person name="Rudd S."/>
            <person name="Schoof H."/>
            <person name="Schueller C."/>
            <person name="Zaccaria P."/>
            <person name="Mewes H.-W."/>
            <person name="Bevan M."/>
            <person name="Fransz P.F."/>
        </authorList>
    </citation>
    <scope>NUCLEOTIDE SEQUENCE [LARGE SCALE GENOMIC DNA]</scope>
    <source>
        <strain>cv. Columbia</strain>
    </source>
</reference>
<reference key="4">
    <citation type="journal article" date="2017" name="Plant J.">
        <title>Araport11: a complete reannotation of the Arabidopsis thaliana reference genome.</title>
        <authorList>
            <person name="Cheng C.Y."/>
            <person name="Krishnakumar V."/>
            <person name="Chan A.P."/>
            <person name="Thibaud-Nissen F."/>
            <person name="Schobel S."/>
            <person name="Town C.D."/>
        </authorList>
    </citation>
    <scope>GENOME REANNOTATION</scope>
    <source>
        <strain>cv. Columbia</strain>
    </source>
</reference>
<protein>
    <recommendedName>
        <fullName>Polyubiquitin 4</fullName>
    </recommendedName>
    <component>
        <recommendedName>
            <fullName>Ubiquitin</fullName>
        </recommendedName>
    </component>
</protein>
<evidence type="ECO:0000250" key="1"/>
<evidence type="ECO:0000255" key="2">
    <source>
        <dbReference type="PROSITE-ProRule" id="PRU00214"/>
    </source>
</evidence>
<evidence type="ECO:0000305" key="3"/>
<gene>
    <name type="primary">UBQ4</name>
    <name type="ordered locus">At5g20620</name>
    <name type="ORF">T1M15.20</name>
</gene>
<keyword id="KW-0963">Cytoplasm</keyword>
<keyword id="KW-1017">Isopeptide bond</keyword>
<keyword id="KW-0539">Nucleus</keyword>
<keyword id="KW-1185">Reference proteome</keyword>
<keyword id="KW-0677">Repeat</keyword>
<keyword id="KW-0833">Ubl conjugation pathway</keyword>
<name>UBQ4_ARATH</name>
<feature type="chain" id="PRO_0000396882" description="Ubiquitin">
    <location>
        <begin position="1"/>
        <end position="76"/>
    </location>
</feature>
<feature type="chain" id="PRO_0000396883" description="Ubiquitin">
    <location>
        <begin position="77"/>
        <end position="152"/>
    </location>
</feature>
<feature type="chain" id="PRO_0000396884" description="Ubiquitin">
    <location>
        <begin position="153"/>
        <end position="228"/>
    </location>
</feature>
<feature type="chain" id="PRO_0000396885" description="Ubiquitin">
    <location>
        <begin position="229"/>
        <end position="304"/>
    </location>
</feature>
<feature type="chain" id="PRO_0000396886" description="Ubiquitin">
    <location>
        <begin position="305"/>
        <end position="380"/>
    </location>
</feature>
<feature type="propeptide" id="PRO_0000396887" evidence="3">
    <location>
        <begin position="381"/>
        <end position="382"/>
    </location>
</feature>
<feature type="domain" description="Ubiquitin-like 1" evidence="2">
    <location>
        <begin position="1"/>
        <end position="76"/>
    </location>
</feature>
<feature type="domain" description="Ubiquitin-like 2" evidence="2">
    <location>
        <begin position="77"/>
        <end position="152"/>
    </location>
</feature>
<feature type="domain" description="Ubiquitin-like 3" evidence="2">
    <location>
        <begin position="153"/>
        <end position="228"/>
    </location>
</feature>
<feature type="domain" description="Ubiquitin-like 4" evidence="2">
    <location>
        <begin position="229"/>
        <end position="304"/>
    </location>
</feature>
<feature type="domain" description="Ubiquitin-like 5" evidence="2">
    <location>
        <begin position="305"/>
        <end position="380"/>
    </location>
</feature>
<feature type="cross-link" description="Glycyl lysine isopeptide (Gly-Lys) (interchain with K-? in acceptor proteins)" evidence="2">
    <location>
        <position position="76"/>
    </location>
</feature>
<organism>
    <name type="scientific">Arabidopsis thaliana</name>
    <name type="common">Mouse-ear cress</name>
    <dbReference type="NCBI Taxonomy" id="3702"/>
    <lineage>
        <taxon>Eukaryota</taxon>
        <taxon>Viridiplantae</taxon>
        <taxon>Streptophyta</taxon>
        <taxon>Embryophyta</taxon>
        <taxon>Tracheophyta</taxon>
        <taxon>Spermatophyta</taxon>
        <taxon>Magnoliopsida</taxon>
        <taxon>eudicotyledons</taxon>
        <taxon>Gunneridae</taxon>
        <taxon>Pentapetalae</taxon>
        <taxon>rosids</taxon>
        <taxon>malvids</taxon>
        <taxon>Brassicales</taxon>
        <taxon>Brassicaceae</taxon>
        <taxon>Camelineae</taxon>
        <taxon>Arabidopsis</taxon>
    </lineage>
</organism>
<proteinExistence type="inferred from homology"/>
<accession>P0CH32</accession>
<accession>O80715</accession>
<accession>P59263</accession>
<accession>Q38875</accession>
<accession>Q9LDJ2</accession>
<accession>Q9LYW1</accession>
<accession>Q9M0W3</accession>
<accession>Q9M1P9</accession>
<accession>Q9S7X3</accession>
<comment type="function">
    <text evidence="1">Ubiquitin exists either covalently attached to another protein, or free (unanchored). When covalently bound, it is conjugated to target proteins via an isopeptide bond either as a monomer (monoubiquitin), a polymer linked via different Lys residues of the ubiquitin (polyubiquitin chains) or a linear polymer linked via the initiator Met of the ubiquitin (linear polyubiquitin chains). Polyubiquitin chains, when attached to a target protein, have different functions depending on the Lys residue of the ubiquitin that is linked: Lys-11-linked is involved in ERAD (endoplasmic reticulum-associated degradation) and in cell-cycle regulation; Lys-29-linked is involved in lysosomal degradation; Lys-33-linked is involved in kinase modification; Lys-48-linked is involved in protein degradation via the proteasome; Lys-63-linked is involved in endocytosis, and DNA-damage responses. Linear polymer chains formed via attachment by the initiator Met lead to cell signaling. Ubiquitin is usually conjugated to Lys residues of target proteins, however, in rare cases, conjugation to Cys or Ser residues has been observed. When polyubiquitin is free (unanchored-polyubiquitin), it also has distinct roles, such as in activation of protein kinases, and in signaling (By similarity).</text>
</comment>
<comment type="subcellular location">
    <subcellularLocation>
        <location evidence="1">Cytoplasm</location>
    </subcellularLocation>
    <subcellularLocation>
        <location evidence="1">Nucleus</location>
    </subcellularLocation>
</comment>
<comment type="miscellaneous">
    <text>Ubiquitin is encoded by 16 different genes. Ubiquitin is generally synthesized as a polyubiquitin precursor with tandem head to tail repeats. Often, there is one to three additional amino acids after the last repeat, removed in the mature protein. Alternatively, ubiquitin extension protein is synthesized as a single copy of ubiquitin fused to a ribosomal protein (either eL40 or eS31) or to a ubiquitin-related protein (either RUB1 or RUB2). Following translation, extension protein is cleaved from ubiquitin.</text>
</comment>
<comment type="miscellaneous">
    <text>For the sake of clarity sequence features are annotated only for the first chain, and are not repeated for each of the following chains.</text>
</comment>
<comment type="similarity">
    <text evidence="3">Belongs to the ubiquitin family.</text>
</comment>
<dbReference type="EMBL" id="X12853">
    <property type="protein sequence ID" value="CAA31331.1"/>
    <property type="molecule type" value="Genomic_DNA"/>
</dbReference>
<dbReference type="EMBL" id="U33014">
    <property type="protein sequence ID" value="AAB53929.1"/>
    <property type="molecule type" value="Genomic_DNA"/>
</dbReference>
<dbReference type="EMBL" id="AF296832">
    <property type="status" value="NOT_ANNOTATED_CDS"/>
    <property type="molecule type" value="Genomic_DNA"/>
</dbReference>
<dbReference type="EMBL" id="CP002688">
    <property type="protein sequence ID" value="AED92867.1"/>
    <property type="molecule type" value="Genomic_DNA"/>
</dbReference>
<dbReference type="PIR" id="S01425">
    <property type="entry name" value="UQMUM"/>
</dbReference>
<dbReference type="RefSeq" id="NP_568397.1">
    <property type="nucleotide sequence ID" value="NM_122069.4"/>
</dbReference>
<dbReference type="SMR" id="P0CH32"/>
<dbReference type="FunCoup" id="P0CH32">
    <property type="interactions" value="1372"/>
</dbReference>
<dbReference type="STRING" id="3702.P0CH32"/>
<dbReference type="PaxDb" id="3702-AT5G20620.1"/>
<dbReference type="EnsemblPlants" id="AT5G20620.1">
    <property type="protein sequence ID" value="AT5G20620.1"/>
    <property type="gene ID" value="AT5G20620"/>
</dbReference>
<dbReference type="GeneID" id="832184"/>
<dbReference type="Gramene" id="AT5G20620.1">
    <property type="protein sequence ID" value="AT5G20620.1"/>
    <property type="gene ID" value="AT5G20620"/>
</dbReference>
<dbReference type="Araport" id="AT5G20620"/>
<dbReference type="TAIR" id="AT5G20620">
    <property type="gene designation" value="UBQ4"/>
</dbReference>
<dbReference type="eggNOG" id="KOG0001">
    <property type="taxonomic scope" value="Eukaryota"/>
</dbReference>
<dbReference type="HOGENOM" id="CLU_010412_7_0_1"/>
<dbReference type="InParanoid" id="P0CH32"/>
<dbReference type="OrthoDB" id="1494560at2759"/>
<dbReference type="PRO" id="PR:P0CH32"/>
<dbReference type="Proteomes" id="UP000006548">
    <property type="component" value="Chromosome 5"/>
</dbReference>
<dbReference type="ExpressionAtlas" id="P0CH32">
    <property type="expression patterns" value="baseline and differential"/>
</dbReference>
<dbReference type="GO" id="GO:0005737">
    <property type="term" value="C:cytoplasm"/>
    <property type="evidence" value="ECO:0007669"/>
    <property type="project" value="UniProtKB-SubCell"/>
</dbReference>
<dbReference type="GO" id="GO:0005634">
    <property type="term" value="C:nucleus"/>
    <property type="evidence" value="ECO:0007669"/>
    <property type="project" value="UniProtKB-SubCell"/>
</dbReference>
<dbReference type="GO" id="GO:0003729">
    <property type="term" value="F:mRNA binding"/>
    <property type="evidence" value="ECO:0000314"/>
    <property type="project" value="TAIR"/>
</dbReference>
<dbReference type="GO" id="GO:0006511">
    <property type="term" value="P:ubiquitin-dependent protein catabolic process"/>
    <property type="evidence" value="ECO:0000304"/>
    <property type="project" value="TAIR"/>
</dbReference>
<dbReference type="CDD" id="cd01803">
    <property type="entry name" value="Ubl_ubiquitin"/>
    <property type="match status" value="5"/>
</dbReference>
<dbReference type="FunFam" id="3.10.20.90:FF:000016">
    <property type="entry name" value="Polyubiquitin 3"/>
    <property type="match status" value="5"/>
</dbReference>
<dbReference type="Gene3D" id="3.10.20.90">
    <property type="entry name" value="Phosphatidylinositol 3-kinase Catalytic Subunit, Chain A, domain 1"/>
    <property type="match status" value="5"/>
</dbReference>
<dbReference type="InterPro" id="IPR000626">
    <property type="entry name" value="Ubiquitin-like_dom"/>
</dbReference>
<dbReference type="InterPro" id="IPR029071">
    <property type="entry name" value="Ubiquitin-like_domsf"/>
</dbReference>
<dbReference type="InterPro" id="IPR019954">
    <property type="entry name" value="Ubiquitin_CS"/>
</dbReference>
<dbReference type="InterPro" id="IPR019956">
    <property type="entry name" value="Ubiquitin_dom"/>
</dbReference>
<dbReference type="InterPro" id="IPR050158">
    <property type="entry name" value="Ubiquitin_ubiquitin-like"/>
</dbReference>
<dbReference type="PANTHER" id="PTHR10666">
    <property type="entry name" value="UBIQUITIN"/>
    <property type="match status" value="1"/>
</dbReference>
<dbReference type="Pfam" id="PF00240">
    <property type="entry name" value="ubiquitin"/>
    <property type="match status" value="5"/>
</dbReference>
<dbReference type="PRINTS" id="PR00348">
    <property type="entry name" value="UBIQUITIN"/>
</dbReference>
<dbReference type="SMART" id="SM00213">
    <property type="entry name" value="UBQ"/>
    <property type="match status" value="5"/>
</dbReference>
<dbReference type="SUPFAM" id="SSF54236">
    <property type="entry name" value="Ubiquitin-like"/>
    <property type="match status" value="5"/>
</dbReference>
<dbReference type="PROSITE" id="PS00299">
    <property type="entry name" value="UBIQUITIN_1"/>
    <property type="match status" value="5"/>
</dbReference>
<dbReference type="PROSITE" id="PS50053">
    <property type="entry name" value="UBIQUITIN_2"/>
    <property type="match status" value="5"/>
</dbReference>